<accession>P10071</accession>
<accession>A4D1W1</accession>
<accession>O75219</accession>
<accession>Q17RW4</accession>
<accession>Q75MT0</accession>
<accession>Q75MU9</accession>
<accession>Q9UDT5</accession>
<accession>Q9UJ39</accession>
<organism>
    <name type="scientific">Homo sapiens</name>
    <name type="common">Human</name>
    <dbReference type="NCBI Taxonomy" id="9606"/>
    <lineage>
        <taxon>Eukaryota</taxon>
        <taxon>Metazoa</taxon>
        <taxon>Chordata</taxon>
        <taxon>Craniata</taxon>
        <taxon>Vertebrata</taxon>
        <taxon>Euteleostomi</taxon>
        <taxon>Mammalia</taxon>
        <taxon>Eutheria</taxon>
        <taxon>Euarchontoglires</taxon>
        <taxon>Primates</taxon>
        <taxon>Haplorrhini</taxon>
        <taxon>Catarrhini</taxon>
        <taxon>Hominidae</taxon>
        <taxon>Homo</taxon>
    </lineage>
</organism>
<name>GLI3_HUMAN</name>
<feature type="chain" id="PRO_0000047202" description="Transcriptional activator GLI3">
    <location>
        <begin position="1"/>
        <end position="1580"/>
    </location>
</feature>
<feature type="chain" id="PRO_0000406137" description="Transcriptional repressor GLI3R">
    <location>
        <begin position="1"/>
        <end status="unknown"/>
    </location>
</feature>
<feature type="zinc finger region" description="C2H2-type 1" evidence="2">
    <location>
        <begin position="480"/>
        <end position="505"/>
    </location>
</feature>
<feature type="zinc finger region" description="C2H2-type 2" evidence="2">
    <location>
        <begin position="513"/>
        <end position="540"/>
    </location>
</feature>
<feature type="zinc finger region" description="C2H2-type 3" evidence="2">
    <location>
        <begin position="546"/>
        <end position="570"/>
    </location>
</feature>
<feature type="zinc finger region" description="C2H2-type 4" evidence="2">
    <location>
        <begin position="576"/>
        <end position="601"/>
    </location>
</feature>
<feature type="zinc finger region" description="C2H2-type 5" evidence="2">
    <location>
        <begin position="607"/>
        <end position="632"/>
    </location>
</feature>
<feature type="region of interest" description="Disordered" evidence="3">
    <location>
        <begin position="1"/>
        <end position="79"/>
    </location>
</feature>
<feature type="region of interest" description="Disordered" evidence="3">
    <location>
        <begin position="368"/>
        <end position="475"/>
    </location>
</feature>
<feature type="region of interest" description="Disordered" evidence="3">
    <location>
        <begin position="620"/>
        <end position="728"/>
    </location>
</feature>
<feature type="region of interest" description="Mediates interaction with DZIP1" evidence="1">
    <location>
        <begin position="745"/>
        <end position="845"/>
    </location>
</feature>
<feature type="region of interest" description="Disordered" evidence="3">
    <location>
        <begin position="863"/>
        <end position="918"/>
    </location>
</feature>
<feature type="region of interest" description="Disordered" evidence="3">
    <location>
        <begin position="981"/>
        <end position="1042"/>
    </location>
</feature>
<feature type="compositionally biased region" description="Polar residues" evidence="3">
    <location>
        <begin position="1"/>
        <end position="10"/>
    </location>
</feature>
<feature type="compositionally biased region" description="Polar residues" evidence="3">
    <location>
        <begin position="58"/>
        <end position="78"/>
    </location>
</feature>
<feature type="compositionally biased region" description="Polar residues" evidence="3">
    <location>
        <begin position="401"/>
        <end position="427"/>
    </location>
</feature>
<feature type="compositionally biased region" description="Basic and acidic residues" evidence="3">
    <location>
        <begin position="461"/>
        <end position="474"/>
    </location>
</feature>
<feature type="compositionally biased region" description="Basic and acidic residues" evidence="3">
    <location>
        <begin position="632"/>
        <end position="648"/>
    </location>
</feature>
<feature type="compositionally biased region" description="Basic and acidic residues" evidence="3">
    <location>
        <begin position="684"/>
        <end position="699"/>
    </location>
</feature>
<feature type="compositionally biased region" description="Low complexity" evidence="3">
    <location>
        <begin position="703"/>
        <end position="726"/>
    </location>
</feature>
<feature type="compositionally biased region" description="Low complexity" evidence="3">
    <location>
        <begin position="863"/>
        <end position="882"/>
    </location>
</feature>
<feature type="compositionally biased region" description="Polar residues" evidence="3">
    <location>
        <begin position="908"/>
        <end position="918"/>
    </location>
</feature>
<feature type="modified residue" description="N-acetylmethionine" evidence="24">
    <location>
        <position position="1"/>
    </location>
</feature>
<feature type="modified residue" description="Omega-N-methylarginine" evidence="1">
    <location>
        <position position="175"/>
    </location>
</feature>
<feature type="modified residue" description="Phosphoserine" evidence="25 26">
    <location>
        <position position="664"/>
    </location>
</feature>
<feature type="modified residue" description="Phosphoserine; by PKA" evidence="6">
    <location>
        <position position="849"/>
    </location>
</feature>
<feature type="modified residue" description="Phosphoserine; by PKA" evidence="6">
    <location>
        <position position="865"/>
    </location>
</feature>
<feature type="modified residue" description="Phosphoserine; by PKA" evidence="6">
    <location>
        <position position="877"/>
    </location>
</feature>
<feature type="modified residue" description="Phosphoserine; by PKA" evidence="6">
    <location>
        <position position="907"/>
    </location>
</feature>
<feature type="modified residue" description="Phosphoserine; by PKA" evidence="6">
    <location>
        <position position="980"/>
    </location>
</feature>
<feature type="modified residue" description="Phosphoserine; by PKA" evidence="6">
    <location>
        <position position="1006"/>
    </location>
</feature>
<feature type="cross-link" description="Glycyl lysine isopeptide (Lys-Gly) (interchain with G-Cter in SUMO2)" evidence="27">
    <location>
        <position position="438"/>
    </location>
</feature>
<feature type="cross-link" description="Glycyl lysine isopeptide (Lys-Gly) (interchain with G-Cter in SUMO2)" evidence="27">
    <location>
        <position position="462"/>
    </location>
</feature>
<feature type="cross-link" description="Glycyl lysine isopeptide (Lys-Gly) (interchain with G-Cter in ubiquitin)" evidence="12">
    <location>
        <position position="773"/>
    </location>
</feature>
<feature type="cross-link" description="Glycyl lysine isopeptide (Lys-Gly) (interchain with G-Cter in SUMO2); alternate" evidence="27">
    <location>
        <position position="779"/>
    </location>
</feature>
<feature type="cross-link" description="Glycyl lysine isopeptide (Lys-Gly) (interchain with G-Cter in ubiquitin); alternate" evidence="12">
    <location>
        <position position="779"/>
    </location>
</feature>
<feature type="cross-link" description="Glycyl lysine isopeptide (Lys-Gly) (interchain with G-Cter in ubiquitin)" evidence="12">
    <location>
        <position position="784"/>
    </location>
</feature>
<feature type="cross-link" description="Glycyl lysine isopeptide (Lys-Gly) (interchain with G-Cter in ubiquitin)" evidence="12">
    <location>
        <position position="800"/>
    </location>
</feature>
<feature type="sequence variant" id="VAR_035560" description="In a colorectal cancer sample; somatic mutation; dbSNP:rs1419861206." evidence="13">
    <original>P</original>
    <variation>L</variation>
    <location>
        <position position="169"/>
    </location>
</feature>
<feature type="sequence variant" id="VAR_028276" description="In dbSNP:rs846266." evidence="4 10 17">
    <original>T</original>
    <variation>A</variation>
    <location>
        <position position="183"/>
    </location>
</feature>
<feature type="sequence variant" id="VAR_010052" evidence="4">
    <original>D</original>
    <variation>E</variation>
    <location>
        <position position="440"/>
    </location>
</feature>
<feature type="sequence variant" id="VAR_010053" description="In GCPS." evidence="4">
    <original>C</original>
    <variation>G</variation>
    <location>
        <position position="515"/>
    </location>
</feature>
<feature type="sequence variant" id="VAR_010054" description="In GCPS." evidence="4">
    <original>C</original>
    <variation>Y</variation>
    <location>
        <position position="520"/>
    </location>
</feature>
<feature type="sequence variant" id="VAR_021481" description="In GCPS; dbSNP:rs121917712." evidence="9">
    <original>R</original>
    <variation>W</variation>
    <location>
        <position position="625"/>
    </location>
</feature>
<feature type="sequence variant" id="VAR_010055" description="In GCPS; dbSNP:rs121917716." evidence="22">
    <original>P</original>
    <variation>S</variation>
    <location>
        <position position="707"/>
    </location>
</feature>
<feature type="sequence variant" id="VAR_009876" description="In PAPA1 and PAPB; dbSNP:rs121917710." evidence="5">
    <original>G</original>
    <variation>R</variation>
    <location>
        <position position="727"/>
    </location>
</feature>
<feature type="sequence variant" id="VAR_010056" description="In dbSNP:rs62622373." evidence="4">
    <original>I</original>
    <variation>M</variation>
    <location>
        <position position="808"/>
    </location>
</feature>
<feature type="sequence variant" id="VAR_021482" description="In GCPS; the patient was originally classifed as being affected by acrocallosal syndrome due to the absence of corpus callosum; dbSNP:rs28933372." evidence="8">
    <original>A</original>
    <variation>P</variation>
    <location>
        <position position="934"/>
    </location>
</feature>
<feature type="sequence variant" id="VAR_028278" description="In dbSNP:rs929387." evidence="4 10 17">
    <original>P</original>
    <variation>L</variation>
    <location>
        <position position="998"/>
    </location>
</feature>
<feature type="sequence variant" id="VAR_035561" description="In a colorectal cancer sample; somatic mutation; dbSNP:rs1277170270." evidence="13">
    <original>S</original>
    <variation>P</variation>
    <location>
        <position position="1304"/>
    </location>
</feature>
<feature type="sequence variant" id="VAR_034865" description="In dbSNP:rs35280470.">
    <original>G</original>
    <variation>E</variation>
    <location>
        <position position="1336"/>
    </location>
</feature>
<feature type="sequence variant" id="VAR_010057" description="In dbSNP:rs35364414." evidence="4">
    <original>R</original>
    <variation>C</variation>
    <location>
        <position position="1537"/>
    </location>
</feature>
<feature type="mutagenesis site" description="Loss of proteolytic processing." evidence="12">
    <original>K</original>
    <variation>R</variation>
    <location>
        <position position="773"/>
    </location>
</feature>
<feature type="mutagenesis site" description="Loss of proteolytic processing." evidence="12">
    <original>K</original>
    <variation>R</variation>
    <location>
        <position position="779"/>
    </location>
</feature>
<feature type="mutagenesis site" description="Loss of proteolytic processing." evidence="12">
    <original>K</original>
    <variation>R</variation>
    <location>
        <position position="784"/>
    </location>
</feature>
<feature type="mutagenesis site" description="Loss of proteolytic processing." evidence="12">
    <original>K</original>
    <variation>R</variation>
    <location>
        <position position="800"/>
    </location>
</feature>
<feature type="mutagenesis site" description="Loss of phosphorylation and proteolytic processing." evidence="6 12">
    <original>S</original>
    <variation>A</variation>
    <location>
        <position position="849"/>
    </location>
</feature>
<feature type="mutagenesis site" description="Loss of proteolytic processing." evidence="12">
    <original>S</original>
    <variation>A</variation>
    <location>
        <position position="855"/>
    </location>
</feature>
<feature type="mutagenesis site" description="Loss of proteolytic processing." evidence="12">
    <original>S</original>
    <variation>A</variation>
    <location>
        <position position="856"/>
    </location>
</feature>
<feature type="mutagenesis site" description="Loss of proteolytic processing." evidence="12">
    <original>S</original>
    <variation>A</variation>
    <location>
        <position position="861"/>
    </location>
</feature>
<feature type="mutagenesis site" description="Loss of proteolytic processing." evidence="12">
    <original>S</original>
    <variation>A</variation>
    <location>
        <position position="864"/>
    </location>
</feature>
<feature type="mutagenesis site" description="Loss of phosphorylation and proteolytic processing." evidence="6">
    <original>S</original>
    <variation>A</variation>
    <location>
        <position position="865"/>
    </location>
</feature>
<feature type="mutagenesis site" description="Loss of proteolytic processing." evidence="12">
    <original>S</original>
    <variation>A</variation>
    <location>
        <position position="873"/>
    </location>
</feature>
<feature type="mutagenesis site" description="Loss of phosphorylation and proteolytic processing." evidence="6 12">
    <original>S</original>
    <variation>A</variation>
    <location>
        <position position="877"/>
    </location>
</feature>
<feature type="mutagenesis site" description="Loss of proteolytic processing." evidence="12">
    <original>S</original>
    <variation>A</variation>
    <location>
        <position position="903"/>
    </location>
</feature>
<feature type="mutagenesis site" description="Loss of phosphorylation and proteolytic processing." evidence="6 12">
    <original>S</original>
    <variation>A</variation>
    <location>
        <position position="907"/>
    </location>
</feature>
<feature type="mutagenesis site" description="Loss of phosphorylation and proteolytic processing." evidence="6">
    <original>S</original>
    <variation>A</variation>
    <location>
        <position position="980"/>
    </location>
</feature>
<feature type="mutagenesis site" description="Loss of phosphorylation and proteolytic processing." evidence="6">
    <original>S</original>
    <variation>A</variation>
    <location>
        <position position="1006"/>
    </location>
</feature>
<feature type="strand" evidence="28">
    <location>
        <begin position="334"/>
        <end position="337"/>
    </location>
</feature>
<reference key="1">
    <citation type="journal article" date="1990" name="Mol. Cell. Biol.">
        <title>GLI3 encodes a 190-kilodalton protein with multiple regions of GLI similarity.</title>
        <authorList>
            <person name="Ruppert J.M."/>
            <person name="Vogelstein B."/>
            <person name="Arheden K."/>
            <person name="Kinzler K.W."/>
        </authorList>
    </citation>
    <scope>NUCLEOTIDE SEQUENCE [MRNA]</scope>
    <scope>VARIANTS ALA-183 AND LEU-998</scope>
</reference>
<reference key="2">
    <citation type="journal article" date="1999" name="Hum. Mol. Genet.">
        <title>Point mutations throughout the GLI3 gene cause Greig cephalopolysyndactylysyndrome.</title>
        <authorList>
            <person name="Kalff-Suske M."/>
            <person name="Wild A."/>
            <person name="Topp J."/>
            <person name="Wessling M."/>
            <person name="Jacobsen E.-M."/>
            <person name="Bornholdt D."/>
            <person name="Engel H."/>
            <person name="Heuer H."/>
            <person name="Aalfs C.M."/>
            <person name="Ausems M.G.E.M."/>
            <person name="Barone R."/>
            <person name="Herzog A."/>
            <person name="Heutink P."/>
            <person name="Homfray T."/>
            <person name="Gillessen-Kaesbach G."/>
            <person name="Koenig R."/>
            <person name="Kunze J."/>
            <person name="Meinecke P."/>
            <person name="Mueller D."/>
            <person name="Rizzo R."/>
            <person name="Strenge S."/>
            <person name="Superti-Furga A."/>
            <person name="Grzeschik K.-H."/>
        </authorList>
    </citation>
    <scope>NUCLEOTIDE SEQUENCE [GENOMIC DNA]</scope>
    <scope>VARIANTS GCPS GLY-515 AND TYR-520</scope>
    <scope>VARIANTS ALA-183; GLU-440; MET-808; LEU-998 AND CYS-1537</scope>
</reference>
<reference key="3">
    <citation type="journal article" date="2003" name="Nature">
        <title>The DNA sequence of human chromosome 7.</title>
        <authorList>
            <person name="Hillier L.W."/>
            <person name="Fulton R.S."/>
            <person name="Fulton L.A."/>
            <person name="Graves T.A."/>
            <person name="Pepin K.H."/>
            <person name="Wagner-McPherson C."/>
            <person name="Layman D."/>
            <person name="Maas J."/>
            <person name="Jaeger S."/>
            <person name="Walker R."/>
            <person name="Wylie K."/>
            <person name="Sekhon M."/>
            <person name="Becker M.C."/>
            <person name="O'Laughlin M.D."/>
            <person name="Schaller M.E."/>
            <person name="Fewell G.A."/>
            <person name="Delehaunty K.D."/>
            <person name="Miner T.L."/>
            <person name="Nash W.E."/>
            <person name="Cordes M."/>
            <person name="Du H."/>
            <person name="Sun H."/>
            <person name="Edwards J."/>
            <person name="Bradshaw-Cordum H."/>
            <person name="Ali J."/>
            <person name="Andrews S."/>
            <person name="Isak A."/>
            <person name="Vanbrunt A."/>
            <person name="Nguyen C."/>
            <person name="Du F."/>
            <person name="Lamar B."/>
            <person name="Courtney L."/>
            <person name="Kalicki J."/>
            <person name="Ozersky P."/>
            <person name="Bielicki L."/>
            <person name="Scott K."/>
            <person name="Holmes A."/>
            <person name="Harkins R."/>
            <person name="Harris A."/>
            <person name="Strong C.M."/>
            <person name="Hou S."/>
            <person name="Tomlinson C."/>
            <person name="Dauphin-Kohlberg S."/>
            <person name="Kozlowicz-Reilly A."/>
            <person name="Leonard S."/>
            <person name="Rohlfing T."/>
            <person name="Rock S.M."/>
            <person name="Tin-Wollam A.-M."/>
            <person name="Abbott A."/>
            <person name="Minx P."/>
            <person name="Maupin R."/>
            <person name="Strowmatt C."/>
            <person name="Latreille P."/>
            <person name="Miller N."/>
            <person name="Johnson D."/>
            <person name="Murray J."/>
            <person name="Woessner J.P."/>
            <person name="Wendl M.C."/>
            <person name="Yang S.-P."/>
            <person name="Schultz B.R."/>
            <person name="Wallis J.W."/>
            <person name="Spieth J."/>
            <person name="Bieri T.A."/>
            <person name="Nelson J.O."/>
            <person name="Berkowicz N."/>
            <person name="Wohldmann P.E."/>
            <person name="Cook L.L."/>
            <person name="Hickenbotham M.T."/>
            <person name="Eldred J."/>
            <person name="Williams D."/>
            <person name="Bedell J.A."/>
            <person name="Mardis E.R."/>
            <person name="Clifton S.W."/>
            <person name="Chissoe S.L."/>
            <person name="Marra M.A."/>
            <person name="Raymond C."/>
            <person name="Haugen E."/>
            <person name="Gillett W."/>
            <person name="Zhou Y."/>
            <person name="James R."/>
            <person name="Phelps K."/>
            <person name="Iadanoto S."/>
            <person name="Bubb K."/>
            <person name="Simms E."/>
            <person name="Levy R."/>
            <person name="Clendenning J."/>
            <person name="Kaul R."/>
            <person name="Kent W.J."/>
            <person name="Furey T.S."/>
            <person name="Baertsch R.A."/>
            <person name="Brent M.R."/>
            <person name="Keibler E."/>
            <person name="Flicek P."/>
            <person name="Bork P."/>
            <person name="Suyama M."/>
            <person name="Bailey J.A."/>
            <person name="Portnoy M.E."/>
            <person name="Torrents D."/>
            <person name="Chinwalla A.T."/>
            <person name="Gish W.R."/>
            <person name="Eddy S.R."/>
            <person name="McPherson J.D."/>
            <person name="Olson M.V."/>
            <person name="Eichler E.E."/>
            <person name="Green E.D."/>
            <person name="Waterston R.H."/>
            <person name="Wilson R.K."/>
        </authorList>
    </citation>
    <scope>NUCLEOTIDE SEQUENCE [LARGE SCALE GENOMIC DNA]</scope>
</reference>
<reference key="4">
    <citation type="journal article" date="2003" name="Science">
        <title>Human chromosome 7: DNA sequence and biology.</title>
        <authorList>
            <person name="Scherer S.W."/>
            <person name="Cheung J."/>
            <person name="MacDonald J.R."/>
            <person name="Osborne L.R."/>
            <person name="Nakabayashi K."/>
            <person name="Herbrick J.-A."/>
            <person name="Carson A.R."/>
            <person name="Parker-Katiraee L."/>
            <person name="Skaug J."/>
            <person name="Khaja R."/>
            <person name="Zhang J."/>
            <person name="Hudek A.K."/>
            <person name="Li M."/>
            <person name="Haddad M."/>
            <person name="Duggan G.E."/>
            <person name="Fernandez B.A."/>
            <person name="Kanematsu E."/>
            <person name="Gentles S."/>
            <person name="Christopoulos C.C."/>
            <person name="Choufani S."/>
            <person name="Kwasnicka D."/>
            <person name="Zheng X.H."/>
            <person name="Lai Z."/>
            <person name="Nusskern D.R."/>
            <person name="Zhang Q."/>
            <person name="Gu Z."/>
            <person name="Lu F."/>
            <person name="Zeesman S."/>
            <person name="Nowaczyk M.J."/>
            <person name="Teshima I."/>
            <person name="Chitayat D."/>
            <person name="Shuman C."/>
            <person name="Weksberg R."/>
            <person name="Zackai E.H."/>
            <person name="Grebe T.A."/>
            <person name="Cox S.R."/>
            <person name="Kirkpatrick S.J."/>
            <person name="Rahman N."/>
            <person name="Friedman J.M."/>
            <person name="Heng H.H.Q."/>
            <person name="Pelicci P.G."/>
            <person name="Lo-Coco F."/>
            <person name="Belloni E."/>
            <person name="Shaffer L.G."/>
            <person name="Pober B."/>
            <person name="Morton C.C."/>
            <person name="Gusella J.F."/>
            <person name="Bruns G.A.P."/>
            <person name="Korf B.R."/>
            <person name="Quade B.J."/>
            <person name="Ligon A.H."/>
            <person name="Ferguson H."/>
            <person name="Higgins A.W."/>
            <person name="Leach N.T."/>
            <person name="Herrick S.R."/>
            <person name="Lemyre E."/>
            <person name="Farra C.G."/>
            <person name="Kim H.-G."/>
            <person name="Summers A.M."/>
            <person name="Gripp K.W."/>
            <person name="Roberts W."/>
            <person name="Szatmari P."/>
            <person name="Winsor E.J.T."/>
            <person name="Grzeschik K.-H."/>
            <person name="Teebi A."/>
            <person name="Minassian B.A."/>
            <person name="Kere J."/>
            <person name="Armengol L."/>
            <person name="Pujana M.A."/>
            <person name="Estivill X."/>
            <person name="Wilson M.D."/>
            <person name="Koop B.F."/>
            <person name="Tosi S."/>
            <person name="Moore G.E."/>
            <person name="Boright A.P."/>
            <person name="Zlotorynski E."/>
            <person name="Kerem B."/>
            <person name="Kroisel P.M."/>
            <person name="Petek E."/>
            <person name="Oscier D.G."/>
            <person name="Mould S.J."/>
            <person name="Doehner H."/>
            <person name="Doehner K."/>
            <person name="Rommens J.M."/>
            <person name="Vincent J.B."/>
            <person name="Venter J.C."/>
            <person name="Li P.W."/>
            <person name="Mural R.J."/>
            <person name="Adams M.D."/>
            <person name="Tsui L.-C."/>
        </authorList>
    </citation>
    <scope>NUCLEOTIDE SEQUENCE [LARGE SCALE GENOMIC DNA]</scope>
</reference>
<reference key="5">
    <citation type="journal article" date="2004" name="Genome Res.">
        <title>The status, quality, and expansion of the NIH full-length cDNA project: the Mammalian Gene Collection (MGC).</title>
        <authorList>
            <consortium name="The MGC Project Team"/>
        </authorList>
    </citation>
    <scope>NUCLEOTIDE SEQUENCE [LARGE SCALE MRNA]</scope>
    <scope>VARIANTS ALA-183 AND LEU-998</scope>
    <source>
        <tissue>Cerebellum</tissue>
    </source>
</reference>
<reference key="6">
    <citation type="journal article" date="1988" name="Mol. Cell. Biol.">
        <title>The GLI-Kruppel family of human genes.</title>
        <authorList>
            <person name="Ruppert J.M."/>
            <person name="Kinzler K.W."/>
            <person name="Wong A.J."/>
            <person name="Bigner S.H."/>
            <person name="Kao F.T."/>
            <person name="Law M.L."/>
            <person name="Seuanez H.N."/>
            <person name="O'Brien S.J."/>
            <person name="Vogelstein B."/>
        </authorList>
    </citation>
    <scope>NUCLEOTIDE SEQUENCE [GENOMIC DNA] OF 500-549</scope>
</reference>
<reference key="7">
    <citation type="journal article" date="2000" name="Cell">
        <title>Hedgehog-regulated processing of Gli3 produces an anterior/posterior repressor gradient in the developing vertebrate limb.</title>
        <authorList>
            <person name="Wang B."/>
            <person name="Fallon J.F."/>
            <person name="Beachy P.A."/>
        </authorList>
    </citation>
    <scope>FUNCTION</scope>
    <scope>PROTEOLYTIC PROCESSING</scope>
    <scope>PHOSPHORYLATION AT SER-849; SER-865; SER-877; SER-907; SER-980 AND SER-1006</scope>
    <scope>MUTAGENESIS OF SER-849; SER-865; SER-877; SER-907; SER-980 AND SER-1006</scope>
</reference>
<reference key="8">
    <citation type="journal article" date="2001" name="J. Biol. Chem.">
        <title>Physical and functional interactions between Zic and Gli proteins.</title>
        <authorList>
            <person name="Koyabu Y."/>
            <person name="Nakata K."/>
            <person name="Mizugishi K."/>
            <person name="Aruga J."/>
            <person name="Mikoshiba K."/>
        </authorList>
    </citation>
    <scope>FUNCTION</scope>
    <scope>INTERACTION WITH ZIC1</scope>
    <scope>SUBCELLULAR LOCATION</scope>
</reference>
<reference key="9">
    <citation type="journal article" date="2006" name="Mol. Cell. Biol.">
        <title>Multisite protein kinase A and glycogen synthase kinase 3beta phosphorylation leads to Gli3 ubiquitination by SCFbetaTrCP.</title>
        <authorList>
            <person name="Tempe D."/>
            <person name="Casas M."/>
            <person name="Karaz S."/>
            <person name="Blanchet-Tournier M.F."/>
            <person name="Concordet J.P."/>
        </authorList>
    </citation>
    <scope>PROTEOLYTIC PROCESSING</scope>
    <scope>PHOSPHORYLATION</scope>
    <scope>INTERACTION WITH BTRC</scope>
    <scope>UBIQUITINATION AT LYS-773; LYS-779; LYS-784 AND LYS-800</scope>
    <scope>MUTAGENESIS OF LYS-773; LYS-779; LYS-784; LYS-800; SER-849; SER-855; SER-856; SER-861; SER-864; SER-873; SER-877; SER-903 AND SER-907</scope>
</reference>
<reference key="10">
    <citation type="journal article" date="2006" name="Proc. Natl. Acad. Sci. U.S.A.">
        <title>Evidence for the direct involvement of {beta}TrCP in Gli3 protein processing.</title>
        <authorList>
            <person name="Wang B."/>
            <person name="Li Y."/>
        </authorList>
    </citation>
    <scope>PROTEOLYTIC PROCESSING</scope>
    <scope>PHOSPHORYLATION</scope>
    <scope>POLYUBIQUITINATION</scope>
    <scope>INTERACTION WITH BTRC</scope>
</reference>
<reference key="11">
    <citation type="journal article" date="2008" name="Cell">
        <title>Application of active and kinase-deficient kinome collection for identification of kinases regulating hedgehog signaling.</title>
        <authorList>
            <person name="Varjosalo M."/>
            <person name="Bjorklund M."/>
            <person name="Cheng F."/>
            <person name="Syvanen H."/>
            <person name="Kivioja T."/>
            <person name="Kilpinen S."/>
            <person name="Sun Z."/>
            <person name="Kallioniemi O."/>
            <person name="Stunnenberg H.G."/>
            <person name="He W.W."/>
            <person name="Ojala P."/>
            <person name="Taipale J."/>
        </authorList>
    </citation>
    <scope>PHOSPHORYLATION</scope>
</reference>
<reference key="12">
    <citation type="journal article" date="2008" name="Hum. Mutat.">
        <title>Characterization of the interactions of human ZIC3 mutants with GLI3.</title>
        <authorList>
            <person name="Zhu L."/>
            <person name="Zhou G."/>
            <person name="Poole S."/>
            <person name="Belmont J.W."/>
        </authorList>
    </citation>
    <scope>FUNCTION</scope>
    <scope>INTERACTION WITH ZIC3</scope>
</reference>
<reference key="13">
    <citation type="journal article" date="2009" name="Anal. Chem.">
        <title>Lys-N and trypsin cover complementary parts of the phosphoproteome in a refined SCX-based approach.</title>
        <authorList>
            <person name="Gauci S."/>
            <person name="Helbig A.O."/>
            <person name="Slijper M."/>
            <person name="Krijgsveld J."/>
            <person name="Heck A.J."/>
            <person name="Mohammed S."/>
        </authorList>
    </citation>
    <scope>ACETYLATION [LARGE SCALE ANALYSIS] AT MET-1</scope>
    <scope>IDENTIFICATION BY MASS SPECTROMETRY [LARGE SCALE ANALYSIS]</scope>
</reference>
<reference key="14">
    <citation type="journal article" date="2009" name="Curr. Biol.">
        <title>The mammalian Cos2 homolog Kif7 plays an essential role in modulating Hh signal transduction during development.</title>
        <authorList>
            <person name="Endoh-Yamagami S."/>
            <person name="Evangelista M."/>
            <person name="Wilson D."/>
            <person name="Wen X."/>
            <person name="Theunissen J.W."/>
            <person name="Phamluong K."/>
            <person name="Davis M."/>
            <person name="Scales S.J."/>
            <person name="Solloway M.J."/>
            <person name="de Sauvage F.J."/>
            <person name="Peterson A.S."/>
        </authorList>
    </citation>
    <scope>SUBCELLULAR LOCATION</scope>
    <scope>INTERACTION WITH KIF7</scope>
</reference>
<reference key="15">
    <citation type="journal article" date="2009" name="Dev. Biol.">
        <title>Trps1, a regulator of chondrocyte proliferation and differentiation, interacts with the activator form of Gli3.</title>
        <authorList>
            <person name="Wuelling M."/>
            <person name="Kaiser F.J."/>
            <person name="Buelens L.A."/>
            <person name="Braunholz D."/>
            <person name="Shivdasani R.A."/>
            <person name="Depping R."/>
            <person name="Vortkamp A."/>
        </authorList>
    </citation>
    <scope>INTERACTION WITH TRPS1</scope>
</reference>
<reference key="16">
    <citation type="journal article" date="2010" name="Exp. Cell Res.">
        <title>Identification of a novel serine/threonine kinase ULK3 as a positive regulator of Hedgehog pathway.</title>
        <authorList>
            <person name="Maloverjan A."/>
            <person name="Piirsoo M."/>
            <person name="Michelson P."/>
            <person name="Kogerman P."/>
            <person name="Osterlund T."/>
        </authorList>
    </citation>
    <scope>PHOSPHORYLATION</scope>
</reference>
<reference key="17">
    <citation type="journal article" date="2011" name="Sci. Signal.">
        <title>System-wide temporal characterization of the proteome and phosphoproteome of human embryonic stem cell differentiation.</title>
        <authorList>
            <person name="Rigbolt K.T."/>
            <person name="Prokhorova T.A."/>
            <person name="Akimov V."/>
            <person name="Henningsen J."/>
            <person name="Johansen P.T."/>
            <person name="Kratchmarova I."/>
            <person name="Kassem M."/>
            <person name="Mann M."/>
            <person name="Olsen J.V."/>
            <person name="Blagoev B."/>
        </authorList>
    </citation>
    <scope>PHOSPHORYLATION [LARGE SCALE ANALYSIS] AT SER-664</scope>
    <scope>IDENTIFICATION BY MASS SPECTROMETRY [LARGE SCALE ANALYSIS]</scope>
</reference>
<reference key="18">
    <citation type="journal article" date="2013" name="J. Biol. Chem.">
        <title>Centrosomal protein DZIP1 regulates Hedgehog signaling by promoting cytoplasmic retention of transcription factor GLI3 and affecting ciliogenesis.</title>
        <authorList>
            <person name="Wang C."/>
            <person name="Low W.C."/>
            <person name="Liu A."/>
            <person name="Wang B."/>
        </authorList>
    </citation>
    <scope>INTERACTION WITH DZIP1</scope>
</reference>
<reference key="19">
    <citation type="journal article" date="2013" name="J. Proteome Res.">
        <title>Toward a comprehensive characterization of a human cancer cell phosphoproteome.</title>
        <authorList>
            <person name="Zhou H."/>
            <person name="Di Palma S."/>
            <person name="Preisinger C."/>
            <person name="Peng M."/>
            <person name="Polat A.N."/>
            <person name="Heck A.J."/>
            <person name="Mohammed S."/>
        </authorList>
    </citation>
    <scope>PHOSPHORYLATION [LARGE SCALE ANALYSIS] AT SER-664</scope>
    <scope>IDENTIFICATION BY MASS SPECTROMETRY [LARGE SCALE ANALYSIS]</scope>
    <source>
        <tissue>Cervix carcinoma</tissue>
    </source>
</reference>
<reference key="20">
    <citation type="journal article" date="2017" name="Nat. Struct. Mol. Biol.">
        <title>Site-specific mapping of the human SUMO proteome reveals co-modification with phosphorylation.</title>
        <authorList>
            <person name="Hendriks I.A."/>
            <person name="Lyon D."/>
            <person name="Young C."/>
            <person name="Jensen L.J."/>
            <person name="Vertegaal A.C."/>
            <person name="Nielsen M.L."/>
        </authorList>
    </citation>
    <scope>SUMOYLATION [LARGE SCALE ANALYSIS] AT LYS-438; LYS-462 AND LYS-779</scope>
    <scope>IDENTIFICATION BY MASS SPECTROMETRY [LARGE SCALE ANALYSIS]</scope>
</reference>
<reference key="21">
    <citation type="journal article" date="2013" name="Acta Crystallogr. D">
        <title>Structural basis of SUFU-GLI interaction in human Hedgehog signalling regulation.</title>
        <authorList>
            <person name="Cherry A.L."/>
            <person name="Finta C."/>
            <person name="Karlstrom M."/>
            <person name="Jin Q."/>
            <person name="Schwend T."/>
            <person name="Astorga-Wells J."/>
            <person name="Zubarev R.A."/>
            <person name="Del Campo M."/>
            <person name="Criswell A.R."/>
            <person name="de Sanctis D."/>
            <person name="Jovine L."/>
            <person name="Toftgard R."/>
        </authorList>
    </citation>
    <scope>X-RAY CRYSTALLOGRAPHY (2.80 ANGSTROMS) OF 328-344 IN COMPLEX WITH SUFU</scope>
    <scope>INTERACTION WITH SUFU</scope>
</reference>
<reference key="22">
    <citation type="journal article" date="1997" name="Hum. Mol. Genet.">
        <title>Point mutations in human GLI3 cause Greig syndrome.</title>
        <authorList>
            <person name="Wild A."/>
            <person name="Kalff-Suske M."/>
            <person name="Vortkamp A."/>
            <person name="Bornholdt D."/>
            <person name="Koenig R."/>
            <person name="Grzeschik K.-H."/>
        </authorList>
    </citation>
    <scope>VARIANT GCPS SER-707</scope>
</reference>
<reference key="23">
    <citation type="journal article" date="1999" name="Am. J. Hum. Genet.">
        <title>The phenotypic spectrum of GLI3 morphopathies includes autosomal dominant preaxial polydactyly type-IV and postaxial polydactyly type-A/B; no phenotype prediction from the position of GLI3 mutations.</title>
        <authorList>
            <person name="Radhakrishna U."/>
            <person name="Bornholdt D."/>
            <person name="Scott H.S."/>
            <person name="Patel U.C."/>
            <person name="Rossier C."/>
            <person name="Engel H."/>
            <person name="Bottani A."/>
            <person name="Chandal D."/>
            <person name="Blouin J.-L."/>
            <person name="Solanki J.V."/>
            <person name="Grzeschik K.-H."/>
            <person name="Antonarakis S.E."/>
        </authorList>
    </citation>
    <scope>VARIANT PAPA1 ARG-727</scope>
    <scope>VARIANT PAPB ARG-727</scope>
    <scope>INVOLVEMENT IN PAPA1</scope>
    <scope>INVOLVEMENT IN PAPB</scope>
    <scope>INVOLVEMENT IN PHS</scope>
    <scope>INVOLVEMENT IN PPD4</scope>
</reference>
<reference key="24">
    <citation type="journal article" date="2002" name="J. Med. Genet.">
        <title>De novo GLI3 mutation in acrocallosal syndrome: broadening the phenotypic spectrum of GLI3 defects and overlap with murine models.</title>
        <authorList>
            <person name="Elson E."/>
            <person name="Perveen R."/>
            <person name="Donnai D."/>
            <person name="Wall S."/>
            <person name="Black G.C.M."/>
        </authorList>
    </citation>
    <scope>VARIANT GCPS PRO-934</scope>
</reference>
<reference key="25">
    <citation type="journal article" date="2003" name="Am. J. Med. Genet. A">
        <title>Variable phenotype in Greig cephalopolysyndactyly syndrome: clinical and radiological findings in 4 independent families and 3 sporadic cases with identified GLI3 mutations.</title>
        <authorList>
            <person name="Debeer P."/>
            <person name="Peeters H."/>
            <person name="Driess S."/>
            <person name="De Smet L."/>
            <person name="Freese K."/>
            <person name="Matthijs G."/>
            <person name="Bornholdt D."/>
            <person name="Devriendt K."/>
            <person name="Grzeschik K.-H."/>
            <person name="Fryns J.-P."/>
            <person name="Kalff-Suske M."/>
        </authorList>
    </citation>
    <scope>VARIANT GCPS TRP-625</scope>
</reference>
<reference key="26">
    <citation type="journal article" date="2006" name="Science">
        <title>The consensus coding sequences of human breast and colorectal cancers.</title>
        <authorList>
            <person name="Sjoeblom T."/>
            <person name="Jones S."/>
            <person name="Wood L.D."/>
            <person name="Parsons D.W."/>
            <person name="Lin J."/>
            <person name="Barber T.D."/>
            <person name="Mandelker D."/>
            <person name="Leary R.J."/>
            <person name="Ptak J."/>
            <person name="Silliman N."/>
            <person name="Szabo S."/>
            <person name="Buckhaults P."/>
            <person name="Farrell C."/>
            <person name="Meeh P."/>
            <person name="Markowitz S.D."/>
            <person name="Willis J."/>
            <person name="Dawson D."/>
            <person name="Willson J.K.V."/>
            <person name="Gazdar A.F."/>
            <person name="Hartigan J."/>
            <person name="Wu L."/>
            <person name="Liu C."/>
            <person name="Parmigiani G."/>
            <person name="Park B.H."/>
            <person name="Bachman K.E."/>
            <person name="Papadopoulos N."/>
            <person name="Vogelstein B."/>
            <person name="Kinzler K.W."/>
            <person name="Velculescu V.E."/>
        </authorList>
    </citation>
    <scope>VARIANTS [LARGE SCALE ANALYSIS] LEU-169 AND PRO-1304</scope>
</reference>
<reference key="27">
    <citation type="journal article" date="2017" name="Am. J. Hum. Genet.">
        <title>Hypomorphic Recessive Variants in SUFU Impair the Sonic Hedgehog Pathway and Cause Joubert Syndrome with Cranio-facial and Skeletal Defects.</title>
        <authorList>
            <person name="De Mori R."/>
            <person name="Romani M."/>
            <person name="D'Arrigo S."/>
            <person name="Zaki M.S."/>
            <person name="Lorefice E."/>
            <person name="Tardivo S."/>
            <person name="Biagini T."/>
            <person name="Stanley V."/>
            <person name="Musaev D."/>
            <person name="Fluss J."/>
            <person name="Micalizzi A."/>
            <person name="Nuovo S."/>
            <person name="Illi B."/>
            <person name="Chiapparini L."/>
            <person name="Di Marcotullio L."/>
            <person name="Issa M.Y."/>
            <person name="Anello D."/>
            <person name="Casella A."/>
            <person name="Ginevrino M."/>
            <person name="Leggins A.S."/>
            <person name="Roosing S."/>
            <person name="Alfonsi R."/>
            <person name="Rosati J."/>
            <person name="Schot R."/>
            <person name="Mancini G.M.S."/>
            <person name="Bertini E."/>
            <person name="Dobyns W.B."/>
            <person name="Mazza T."/>
            <person name="Gleeson J.G."/>
            <person name="Valente E.M."/>
        </authorList>
    </citation>
    <scope>INTERACTION WITH SUFU</scope>
</reference>
<reference key="28">
    <citation type="journal article" date="2018" name="EMBO Rep.">
        <title>WDR11-mediated Hedgehog signalling defects underlie a new ciliopathy related to Kallmann syndrome.</title>
        <authorList>
            <person name="Kim Y.J."/>
            <person name="Osborn D.P."/>
            <person name="Lee J.Y."/>
            <person name="Araki M."/>
            <person name="Araki K."/>
            <person name="Mohun T."/>
            <person name="Kaensaekoski J."/>
            <person name="Brandstack N."/>
            <person name="Kim H.T."/>
            <person name="Miralles F."/>
            <person name="Kim C.H."/>
            <person name="Brown N.A."/>
            <person name="Kim H.G."/>
            <person name="Martinez-Barbera J.P."/>
            <person name="Ataliotis P."/>
            <person name="Raivio T."/>
            <person name="Layman L.C."/>
            <person name="Kim S.H."/>
        </authorList>
    </citation>
    <scope>INTERACTION WITH WDR11</scope>
</reference>
<keyword id="KW-0002">3D-structure</keyword>
<keyword id="KW-0007">Acetylation</keyword>
<keyword id="KW-0010">Activator</keyword>
<keyword id="KW-0966">Cell projection</keyword>
<keyword id="KW-0969">Cilium</keyword>
<keyword id="KW-0963">Cytoplasm</keyword>
<keyword id="KW-0225">Disease variant</keyword>
<keyword id="KW-0238">DNA-binding</keyword>
<keyword id="KW-1017">Isopeptide bond</keyword>
<keyword id="KW-0479">Metal-binding</keyword>
<keyword id="KW-0488">Methylation</keyword>
<keyword id="KW-0539">Nucleus</keyword>
<keyword id="KW-0597">Phosphoprotein</keyword>
<keyword id="KW-1267">Proteomics identification</keyword>
<keyword id="KW-1185">Reference proteome</keyword>
<keyword id="KW-0677">Repeat</keyword>
<keyword id="KW-0678">Repressor</keyword>
<keyword id="KW-0804">Transcription</keyword>
<keyword id="KW-0805">Transcription regulation</keyword>
<keyword id="KW-0832">Ubl conjugation</keyword>
<keyword id="KW-0862">Zinc</keyword>
<keyword id="KW-0863">Zinc-finger</keyword>
<protein>
    <recommendedName>
        <fullName>Transcriptional activator GLI3</fullName>
    </recommendedName>
    <alternativeName>
        <fullName>GLI3 form of 190 kDa</fullName>
        <shortName>GLI3-190</shortName>
    </alternativeName>
    <alternativeName>
        <fullName>GLI3 full-length protein</fullName>
        <shortName>GLI3FL</shortName>
    </alternativeName>
    <component>
        <recommendedName>
            <fullName>Transcriptional repressor GLI3R</fullName>
        </recommendedName>
        <alternativeName>
            <fullName>GLI3 C-terminally truncated form</fullName>
        </alternativeName>
        <alternativeName>
            <fullName>GLI3 form of 83 kDa</fullName>
            <shortName>GLI3-83</shortName>
        </alternativeName>
    </component>
</protein>
<sequence length="1580" mass="169863">MEAQSHSSTTTEKKKVENSIVKCSTRTDVSEKAVASSTTSNEDESPGQTYHRERRNAITMQPQNVQGLSKVSEEPSTSSDERASLIKKEIHGSLPHVAEPSVPYRGTVFAMDPRNGYMEPHYHPPHLFPAFHPPVPIDARHHEGRYHYDPSPIPPLHMTSALSSSPTYPDLPFIRISPHRNPTAASESPFSPPHPYINPYMDYIRSLHSSPSLSMISATRGLSPTDAPHAGVSPAEYYHQMALLTGQRSPYADIIPSAATAGTGAIHMEYLHAMDSTRFSSPRLSARPSRKRTLSISPLSDHSFDLQTMIRTSPNSLVTILNNSRSSSSASGSYGHLSASAISPALSFTYSSAPVSLHMHQQILSRQQSLGSAFGHSPPLIHPAPTFPTQRPIPGIPTVLNPVQVSSGPSESSQNKPTSESAVSSTGDPMHNKRSKIKPDEDLPSPGARGQQEQPEGTTLVKEEGDKDESKQEPEVIYETNCHWEGCAREFDTQEQLVHHINNDHIHGEKKEFVCRWLDCSREQKPFKAQYMLVVHMRRHTGEKPHKCTFEGCTKAYSRLENLKTHLRSHTGEKPYVCEHEGCNKAFSNASDRAKHQNRTHSNEKPYVCKIPGCTKRYTDPSSLRKHVKTVHGPEAHVTKKQRGDIHPRPPPPRDSGSHSQSRSPGRPTQGALGEQQDLSNTTSKREECLQVKTVKAEKPMTSQPSPGGQSSCSSQQSPISNYSNSGLELPLTDGGSIGDLSAIDETPIMDSTISTATTALALQARRNPAGTKWMEHVKLERLKQVNGMFPRLNPILPPKAPAVSPLIGNGTQSNNTCSLGGPMTLLPGRSDLSGVDVTMLNMLNRRDSSASTISSAYLSSRRSSGISPCFSSRRSSEASQAEGRPQNVSVADSYDPISTDASRRSSEASQSDGLPSLLSLTPAQQYRLKAKYAAATGGPPPTPLPNMERMSLKTRLALLGDALEPGVALPPVHAPRRCSDGGAHGYGRRHLQPHDAPGHGVRRASDPVRTGSEGLALPRVPRFSSLSSCNPPAMATSAEKRSLVLQNYTRPEGGQSRNFHSSPCPPSITENVTLESLTMDADANLNDEDFLPDDVVQYLNSQNQAGYEQHFPSALPDDSKVPHGPGDFDAPGLPDSHAGQQFHALEQPCPEGSKTDLPIQWNEVSSGSADLSSSKLKCGPRPAVPQTRAFGFCNGMVVHPQNPLRSGPAGGYQTLGENSNPYGGPEHLMLHNSPGSGTSGNAFHEQPCKAPQYGNCLNRQPVAPGALDGACGAGIQASKLKSTPMQGSGGQLNFGLPVAPNESAGSMVNGMQNQDPVGQGYLAHQLLGDSMQHPGAGRPGQQMLGQISATSHINIYQGPESCLPGAHGMGSQPSSLAVVRGYQPCASFGGSRRQAMPRDSLALQSGQLSDTSQTCRVNGIKMEMKGQPHPLCSNLQNYSGQFYDQTVGFSQQDTKAGSFSISDASCLLQGTSAKNSELLSPGANQVTSTVDSLDSHDLEGVQIDFDAIIDDGDHSSLMSGALSPSIIQNLSHSSSRLTTPRASLPFPALSMSTTNMAIGDMSSLLTSLAEESKFLAVMQ</sequence>
<proteinExistence type="evidence at protein level"/>
<dbReference type="EMBL" id="M57609">
    <property type="protein sequence ID" value="AAA52564.1"/>
    <property type="status" value="ALT_FRAME"/>
    <property type="molecule type" value="mRNA"/>
</dbReference>
<dbReference type="EMBL" id="AJ250408">
    <property type="protein sequence ID" value="CAB59315.1"/>
    <property type="molecule type" value="Genomic_DNA"/>
</dbReference>
<dbReference type="EMBL" id="AC005026">
    <property type="protein sequence ID" value="AAP21869.1"/>
    <property type="molecule type" value="Genomic_DNA"/>
</dbReference>
<dbReference type="EMBL" id="AC005028">
    <property type="protein sequence ID" value="AAS01998.1"/>
    <property type="molecule type" value="Genomic_DNA"/>
</dbReference>
<dbReference type="EMBL" id="AC005158">
    <property type="protein sequence ID" value="AAS02015.1"/>
    <property type="molecule type" value="Genomic_DNA"/>
</dbReference>
<dbReference type="EMBL" id="AC073852">
    <property type="status" value="NOT_ANNOTATED_CDS"/>
    <property type="molecule type" value="Genomic_DNA"/>
</dbReference>
<dbReference type="EMBL" id="CH236951">
    <property type="protein sequence ID" value="EAL24002.1"/>
    <property type="molecule type" value="Genomic_DNA"/>
</dbReference>
<dbReference type="EMBL" id="M20674">
    <property type="status" value="NOT_ANNOTATED_CDS"/>
    <property type="molecule type" value="Genomic_DNA"/>
</dbReference>
<dbReference type="EMBL" id="BC113616">
    <property type="protein sequence ID" value="AAI13617.1"/>
    <property type="molecule type" value="mRNA"/>
</dbReference>
<dbReference type="EMBL" id="BC117168">
    <property type="protein sequence ID" value="AAI17169.1"/>
    <property type="molecule type" value="mRNA"/>
</dbReference>
<dbReference type="CCDS" id="CCDS5465.1"/>
<dbReference type="PIR" id="A35927">
    <property type="entry name" value="A35927"/>
</dbReference>
<dbReference type="RefSeq" id="NP_000159.3">
    <property type="nucleotide sequence ID" value="NM_000168.5"/>
</dbReference>
<dbReference type="RefSeq" id="XP_047276161.1">
    <property type="nucleotide sequence ID" value="XM_047420205.1"/>
</dbReference>
<dbReference type="RefSeq" id="XP_047276162.1">
    <property type="nucleotide sequence ID" value="XM_047420206.1"/>
</dbReference>
<dbReference type="RefSeq" id="XP_047276163.1">
    <property type="nucleotide sequence ID" value="XM_047420207.1"/>
</dbReference>
<dbReference type="RefSeq" id="XP_047276164.1">
    <property type="nucleotide sequence ID" value="XM_047420208.1"/>
</dbReference>
<dbReference type="RefSeq" id="XP_047276165.1">
    <property type="nucleotide sequence ID" value="XM_047420209.1"/>
</dbReference>
<dbReference type="RefSeq" id="XP_054213888.1">
    <property type="nucleotide sequence ID" value="XM_054357913.1"/>
</dbReference>
<dbReference type="RefSeq" id="XP_054213889.1">
    <property type="nucleotide sequence ID" value="XM_054357914.1"/>
</dbReference>
<dbReference type="RefSeq" id="XP_054213890.1">
    <property type="nucleotide sequence ID" value="XM_054357915.1"/>
</dbReference>
<dbReference type="RefSeq" id="XP_054213891.1">
    <property type="nucleotide sequence ID" value="XM_054357916.1"/>
</dbReference>
<dbReference type="RefSeq" id="XP_054213892.1">
    <property type="nucleotide sequence ID" value="XM_054357917.1"/>
</dbReference>
<dbReference type="PDB" id="4BLD">
    <property type="method" value="X-ray"/>
    <property type="resolution" value="2.80 A"/>
    <property type="chains" value="E/F/G/H=328-344"/>
</dbReference>
<dbReference type="PDBsum" id="4BLD"/>
<dbReference type="SMR" id="P10071"/>
<dbReference type="BioGRID" id="108999">
    <property type="interactions" value="76"/>
</dbReference>
<dbReference type="ComplexPortal" id="CPX-150">
    <property type="entry name" value="GLI3-SUFU complex"/>
</dbReference>
<dbReference type="CORUM" id="P10071"/>
<dbReference type="DIP" id="DIP-32538N"/>
<dbReference type="ELM" id="P10071"/>
<dbReference type="FunCoup" id="P10071">
    <property type="interactions" value="1748"/>
</dbReference>
<dbReference type="IntAct" id="P10071">
    <property type="interactions" value="47"/>
</dbReference>
<dbReference type="MINT" id="P10071"/>
<dbReference type="STRING" id="9606.ENSP00000379258"/>
<dbReference type="GlyGen" id="P10071">
    <property type="glycosylation" value="3 sites, 1 N-linked glycan (1 site), 1 O-linked glycan (1 site)"/>
</dbReference>
<dbReference type="iPTMnet" id="P10071"/>
<dbReference type="PhosphoSitePlus" id="P10071"/>
<dbReference type="BioMuta" id="GLI3"/>
<dbReference type="DMDM" id="269849770"/>
<dbReference type="jPOST" id="P10071"/>
<dbReference type="MassIVE" id="P10071"/>
<dbReference type="PaxDb" id="9606-ENSP00000379258"/>
<dbReference type="PeptideAtlas" id="P10071"/>
<dbReference type="ProteomicsDB" id="52557"/>
<dbReference type="Pumba" id="P10071"/>
<dbReference type="ABCD" id="P10071">
    <property type="antibodies" value="1 sequenced antibody"/>
</dbReference>
<dbReference type="Antibodypedia" id="647">
    <property type="antibodies" value="292 antibodies from 38 providers"/>
</dbReference>
<dbReference type="DNASU" id="2737"/>
<dbReference type="Ensembl" id="ENST00000395925.8">
    <property type="protein sequence ID" value="ENSP00000379258.3"/>
    <property type="gene ID" value="ENSG00000106571.15"/>
</dbReference>
<dbReference type="Ensembl" id="ENST00000677605.1">
    <property type="protein sequence ID" value="ENSP00000503743.1"/>
    <property type="gene ID" value="ENSG00000106571.15"/>
</dbReference>
<dbReference type="Ensembl" id="ENST00000678429.1">
    <property type="protein sequence ID" value="ENSP00000502957.1"/>
    <property type="gene ID" value="ENSG00000106571.15"/>
</dbReference>
<dbReference type="GeneID" id="2737"/>
<dbReference type="KEGG" id="hsa:2737"/>
<dbReference type="MANE-Select" id="ENST00000395925.8">
    <property type="protein sequence ID" value="ENSP00000379258.3"/>
    <property type="RefSeq nucleotide sequence ID" value="NM_000168.6"/>
    <property type="RefSeq protein sequence ID" value="NP_000159.3"/>
</dbReference>
<dbReference type="UCSC" id="uc011kbh.3">
    <property type="organism name" value="human"/>
</dbReference>
<dbReference type="AGR" id="HGNC:4319"/>
<dbReference type="CTD" id="2737"/>
<dbReference type="DisGeNET" id="2737"/>
<dbReference type="GeneCards" id="GLI3"/>
<dbReference type="GeneReviews" id="GLI3"/>
<dbReference type="HGNC" id="HGNC:4319">
    <property type="gene designation" value="GLI3"/>
</dbReference>
<dbReference type="HPA" id="ENSG00000106571">
    <property type="expression patterns" value="Low tissue specificity"/>
</dbReference>
<dbReference type="MalaCards" id="GLI3"/>
<dbReference type="MIM" id="146510">
    <property type="type" value="phenotype"/>
</dbReference>
<dbReference type="MIM" id="165240">
    <property type="type" value="gene"/>
</dbReference>
<dbReference type="MIM" id="174200">
    <property type="type" value="phenotype"/>
</dbReference>
<dbReference type="MIM" id="174700">
    <property type="type" value="phenotype"/>
</dbReference>
<dbReference type="MIM" id="175700">
    <property type="type" value="phenotype"/>
</dbReference>
<dbReference type="neXtProt" id="NX_P10071"/>
<dbReference type="OpenTargets" id="ENSG00000106571"/>
<dbReference type="Orphanet" id="36">
    <property type="disease" value="Acrocallosal syndrome"/>
</dbReference>
<dbReference type="Orphanet" id="380">
    <property type="disease" value="Greig cephalopolysyndactyly syndrome"/>
</dbReference>
<dbReference type="Orphanet" id="93322">
    <property type="disease" value="Isolated tibial hemimelia"/>
</dbReference>
<dbReference type="Orphanet" id="672">
    <property type="disease" value="Pallister-Hall syndrome"/>
</dbReference>
<dbReference type="Orphanet" id="93338">
    <property type="disease" value="Polysyndactyly"/>
</dbReference>
<dbReference type="Orphanet" id="93334">
    <property type="disease" value="Postaxial polydactyly type A"/>
</dbReference>
<dbReference type="Orphanet" id="93335">
    <property type="disease" value="Postaxial polydactyly type B"/>
</dbReference>
<dbReference type="PharmGKB" id="PA28722"/>
<dbReference type="VEuPathDB" id="HostDB:ENSG00000106571"/>
<dbReference type="eggNOG" id="KOG1721">
    <property type="taxonomic scope" value="Eukaryota"/>
</dbReference>
<dbReference type="GeneTree" id="ENSGT00940000155925"/>
<dbReference type="HOGENOM" id="CLU_003666_3_0_1"/>
<dbReference type="InParanoid" id="P10071"/>
<dbReference type="OMA" id="NMMEQEY"/>
<dbReference type="OrthoDB" id="3214149at2759"/>
<dbReference type="PAN-GO" id="P10071">
    <property type="GO annotations" value="5 GO annotations based on evolutionary models"/>
</dbReference>
<dbReference type="PhylomeDB" id="P10071"/>
<dbReference type="TreeFam" id="TF350216"/>
<dbReference type="PathwayCommons" id="P10071"/>
<dbReference type="Reactome" id="R-HSA-5610785">
    <property type="pathway name" value="GLI3 is processed to GLI3R by the proteasome"/>
</dbReference>
<dbReference type="Reactome" id="R-HSA-5610787">
    <property type="pathway name" value="Hedgehog 'off' state"/>
</dbReference>
<dbReference type="Reactome" id="R-HSA-5632684">
    <property type="pathway name" value="Hedgehog 'on' state"/>
</dbReference>
<dbReference type="Reactome" id="R-HSA-5635851">
    <property type="pathway name" value="GLI proteins bind promoters of Hh responsive genes to promote transcription"/>
</dbReference>
<dbReference type="Reactome" id="R-HSA-8940973">
    <property type="pathway name" value="RUNX2 regulates osteoblast differentiation"/>
</dbReference>
<dbReference type="SignaLink" id="P10071"/>
<dbReference type="SIGNOR" id="P10071"/>
<dbReference type="BioGRID-ORCS" id="2737">
    <property type="hits" value="12 hits in 1169 CRISPR screens"/>
</dbReference>
<dbReference type="ChiTaRS" id="GLI3">
    <property type="organism name" value="human"/>
</dbReference>
<dbReference type="EvolutionaryTrace" id="P10071"/>
<dbReference type="GeneWiki" id="GLI3"/>
<dbReference type="GenomeRNAi" id="2737"/>
<dbReference type="Pharos" id="P10071">
    <property type="development level" value="Tbio"/>
</dbReference>
<dbReference type="PRO" id="PR:P10071"/>
<dbReference type="Proteomes" id="UP000005640">
    <property type="component" value="Chromosome 7"/>
</dbReference>
<dbReference type="RNAct" id="P10071">
    <property type="molecule type" value="protein"/>
</dbReference>
<dbReference type="Bgee" id="ENSG00000106571">
    <property type="expression patterns" value="Expressed in ventricular zone and 199 other cell types or tissues"/>
</dbReference>
<dbReference type="ExpressionAtlas" id="P10071">
    <property type="expression patterns" value="baseline and differential"/>
</dbReference>
<dbReference type="GO" id="GO:0005930">
    <property type="term" value="C:axoneme"/>
    <property type="evidence" value="ECO:0007669"/>
    <property type="project" value="Ensembl"/>
</dbReference>
<dbReference type="GO" id="GO:0097546">
    <property type="term" value="C:ciliary base"/>
    <property type="evidence" value="ECO:0000304"/>
    <property type="project" value="Reactome"/>
</dbReference>
<dbReference type="GO" id="GO:0097542">
    <property type="term" value="C:ciliary tip"/>
    <property type="evidence" value="ECO:0000304"/>
    <property type="project" value="Reactome"/>
</dbReference>
<dbReference type="GO" id="GO:0005929">
    <property type="term" value="C:cilium"/>
    <property type="evidence" value="ECO:0000314"/>
    <property type="project" value="UniProtKB"/>
</dbReference>
<dbReference type="GO" id="GO:0005737">
    <property type="term" value="C:cytoplasm"/>
    <property type="evidence" value="ECO:0000314"/>
    <property type="project" value="UniProtKB"/>
</dbReference>
<dbReference type="GO" id="GO:0005829">
    <property type="term" value="C:cytosol"/>
    <property type="evidence" value="ECO:0000314"/>
    <property type="project" value="UniProtKB"/>
</dbReference>
<dbReference type="GO" id="GO:1990788">
    <property type="term" value="C:GLI-SUFU complex"/>
    <property type="evidence" value="ECO:0000353"/>
    <property type="project" value="ComplexPortal"/>
</dbReference>
<dbReference type="GO" id="GO:0043231">
    <property type="term" value="C:intracellular membrane-bounded organelle"/>
    <property type="evidence" value="ECO:0000314"/>
    <property type="project" value="HPA"/>
</dbReference>
<dbReference type="GO" id="GO:0016607">
    <property type="term" value="C:nuclear speck"/>
    <property type="evidence" value="ECO:0007669"/>
    <property type="project" value="Ensembl"/>
</dbReference>
<dbReference type="GO" id="GO:0005730">
    <property type="term" value="C:nucleolus"/>
    <property type="evidence" value="ECO:0000314"/>
    <property type="project" value="HPA"/>
</dbReference>
<dbReference type="GO" id="GO:0005654">
    <property type="term" value="C:nucleoplasm"/>
    <property type="evidence" value="ECO:0000314"/>
    <property type="project" value="HPA"/>
</dbReference>
<dbReference type="GO" id="GO:0005634">
    <property type="term" value="C:nucleus"/>
    <property type="evidence" value="ECO:0000314"/>
    <property type="project" value="UniProtKB"/>
</dbReference>
<dbReference type="GO" id="GO:0017053">
    <property type="term" value="C:transcription repressor complex"/>
    <property type="evidence" value="ECO:0007669"/>
    <property type="project" value="Ensembl"/>
</dbReference>
<dbReference type="GO" id="GO:0008013">
    <property type="term" value="F:beta-catenin binding"/>
    <property type="evidence" value="ECO:0000353"/>
    <property type="project" value="UniProtKB"/>
</dbReference>
<dbReference type="GO" id="GO:0003682">
    <property type="term" value="F:chromatin binding"/>
    <property type="evidence" value="ECO:0007669"/>
    <property type="project" value="Ensembl"/>
</dbReference>
<dbReference type="GO" id="GO:0003700">
    <property type="term" value="F:DNA-binding transcription factor activity"/>
    <property type="evidence" value="ECO:0000314"/>
    <property type="project" value="UniProtKB"/>
</dbReference>
<dbReference type="GO" id="GO:0000981">
    <property type="term" value="F:DNA-binding transcription factor activity, RNA polymerase II-specific"/>
    <property type="evidence" value="ECO:0000318"/>
    <property type="project" value="GO_Central"/>
</dbReference>
<dbReference type="GO" id="GO:0035035">
    <property type="term" value="F:histone acetyltransferase binding"/>
    <property type="evidence" value="ECO:0000353"/>
    <property type="project" value="UniProtKB"/>
</dbReference>
<dbReference type="GO" id="GO:0042826">
    <property type="term" value="F:histone deacetylase binding"/>
    <property type="evidence" value="ECO:0000314"/>
    <property type="project" value="UniProtKB"/>
</dbReference>
<dbReference type="GO" id="GO:0036033">
    <property type="term" value="F:mediator complex binding"/>
    <property type="evidence" value="ECO:0000314"/>
    <property type="project" value="UniProtKB"/>
</dbReference>
<dbReference type="GO" id="GO:0000978">
    <property type="term" value="F:RNA polymerase II cis-regulatory region sequence-specific DNA binding"/>
    <property type="evidence" value="ECO:0000314"/>
    <property type="project" value="MGI"/>
</dbReference>
<dbReference type="GO" id="GO:0000977">
    <property type="term" value="F:RNA polymerase II transcription regulatory region sequence-specific DNA binding"/>
    <property type="evidence" value="ECO:0000314"/>
    <property type="project" value="MGI"/>
</dbReference>
<dbReference type="GO" id="GO:1990837">
    <property type="term" value="F:sequence-specific double-stranded DNA binding"/>
    <property type="evidence" value="ECO:0000314"/>
    <property type="project" value="ARUK-UCL"/>
</dbReference>
<dbReference type="GO" id="GO:0008270">
    <property type="term" value="F:zinc ion binding"/>
    <property type="evidence" value="ECO:0007669"/>
    <property type="project" value="UniProtKB-KW"/>
</dbReference>
<dbReference type="GO" id="GO:0046632">
    <property type="term" value="P:alpha-beta T cell differentiation"/>
    <property type="evidence" value="ECO:0007669"/>
    <property type="project" value="Ensembl"/>
</dbReference>
<dbReference type="GO" id="GO:0060873">
    <property type="term" value="P:anterior semicircular canal development"/>
    <property type="evidence" value="ECO:0007669"/>
    <property type="project" value="Ensembl"/>
</dbReference>
<dbReference type="GO" id="GO:0009952">
    <property type="term" value="P:anterior/posterior pattern specification"/>
    <property type="evidence" value="ECO:0007669"/>
    <property type="project" value="Ensembl"/>
</dbReference>
<dbReference type="GO" id="GO:0060840">
    <property type="term" value="P:artery development"/>
    <property type="evidence" value="ECO:0007669"/>
    <property type="project" value="Ensembl"/>
</dbReference>
<dbReference type="GO" id="GO:0007411">
    <property type="term" value="P:axon guidance"/>
    <property type="evidence" value="ECO:0007669"/>
    <property type="project" value="Ensembl"/>
</dbReference>
<dbReference type="GO" id="GO:0001658">
    <property type="term" value="P:branching involved in ureteric bud morphogenesis"/>
    <property type="evidence" value="ECO:0007669"/>
    <property type="project" value="Ensembl"/>
</dbReference>
<dbReference type="GO" id="GO:0048593">
    <property type="term" value="P:camera-type eye morphogenesis"/>
    <property type="evidence" value="ECO:0007669"/>
    <property type="project" value="Ensembl"/>
</dbReference>
<dbReference type="GO" id="GO:0061005">
    <property type="term" value="P:cell differentiation involved in kidney development"/>
    <property type="evidence" value="ECO:0007669"/>
    <property type="project" value="Ensembl"/>
</dbReference>
<dbReference type="GO" id="GO:0002062">
    <property type="term" value="P:chondrocyte differentiation"/>
    <property type="evidence" value="ECO:0007669"/>
    <property type="project" value="Ensembl"/>
</dbReference>
<dbReference type="GO" id="GO:0048589">
    <property type="term" value="P:developmental growth"/>
    <property type="evidence" value="ECO:0007669"/>
    <property type="project" value="Ensembl"/>
</dbReference>
<dbReference type="GO" id="GO:0048566">
    <property type="term" value="P:embryonic digestive tract development"/>
    <property type="evidence" value="ECO:0000304"/>
    <property type="project" value="BHF-UCL"/>
</dbReference>
<dbReference type="GO" id="GO:0048557">
    <property type="term" value="P:embryonic digestive tract morphogenesis"/>
    <property type="evidence" value="ECO:0007669"/>
    <property type="project" value="Ensembl"/>
</dbReference>
<dbReference type="GO" id="GO:0042733">
    <property type="term" value="P:embryonic digit morphogenesis"/>
    <property type="evidence" value="ECO:0000304"/>
    <property type="project" value="BHF-UCL"/>
</dbReference>
<dbReference type="GO" id="GO:0048702">
    <property type="term" value="P:embryonic neurocranium morphogenesis"/>
    <property type="evidence" value="ECO:0007669"/>
    <property type="project" value="Ensembl"/>
</dbReference>
<dbReference type="GO" id="GO:0021798">
    <property type="term" value="P:forebrain dorsal/ventral pattern formation"/>
    <property type="evidence" value="ECO:0007669"/>
    <property type="project" value="Ensembl"/>
</dbReference>
<dbReference type="GO" id="GO:0021861">
    <property type="term" value="P:forebrain radial glial cell differentiation"/>
    <property type="evidence" value="ECO:0007669"/>
    <property type="project" value="Ensembl"/>
</dbReference>
<dbReference type="GO" id="GO:0060364">
    <property type="term" value="P:frontal suture morphogenesis"/>
    <property type="evidence" value="ECO:0007669"/>
    <property type="project" value="Ensembl"/>
</dbReference>
<dbReference type="GO" id="GO:0007507">
    <property type="term" value="P:heart development"/>
    <property type="evidence" value="ECO:0007669"/>
    <property type="project" value="Ensembl"/>
</dbReference>
<dbReference type="GO" id="GO:0007442">
    <property type="term" value="P:hindgut morphogenesis"/>
    <property type="evidence" value="ECO:0007669"/>
    <property type="project" value="Ensembl"/>
</dbReference>
<dbReference type="GO" id="GO:0021766">
    <property type="term" value="P:hippocampus development"/>
    <property type="evidence" value="ECO:0007669"/>
    <property type="project" value="Ensembl"/>
</dbReference>
<dbReference type="GO" id="GO:0001701">
    <property type="term" value="P:in utero embryonic development"/>
    <property type="evidence" value="ECO:0007669"/>
    <property type="project" value="Ensembl"/>
</dbReference>
<dbReference type="GO" id="GO:0060366">
    <property type="term" value="P:lambdoid suture morphogenesis"/>
    <property type="evidence" value="ECO:0007669"/>
    <property type="project" value="Ensembl"/>
</dbReference>
<dbReference type="GO" id="GO:0120223">
    <property type="term" value="P:larynx morphogenesis"/>
    <property type="evidence" value="ECO:0007669"/>
    <property type="project" value="Ensembl"/>
</dbReference>
<dbReference type="GO" id="GO:0022018">
    <property type="term" value="P:lateral ganglionic eminence cell proliferation"/>
    <property type="evidence" value="ECO:0007669"/>
    <property type="project" value="Ensembl"/>
</dbReference>
<dbReference type="GO" id="GO:0060875">
    <property type="term" value="P:lateral semicircular canal development"/>
    <property type="evidence" value="ECO:0007669"/>
    <property type="project" value="Ensembl"/>
</dbReference>
<dbReference type="GO" id="GO:0021819">
    <property type="term" value="P:layer formation in cerebral cortex"/>
    <property type="evidence" value="ECO:0007669"/>
    <property type="project" value="Ensembl"/>
</dbReference>
<dbReference type="GO" id="GO:0035108">
    <property type="term" value="P:limb morphogenesis"/>
    <property type="evidence" value="ECO:0000315"/>
    <property type="project" value="UniProtKB"/>
</dbReference>
<dbReference type="GO" id="GO:0030324">
    <property type="term" value="P:lung development"/>
    <property type="evidence" value="ECO:0007669"/>
    <property type="project" value="Ensembl"/>
</dbReference>
<dbReference type="GO" id="GO:0060594">
    <property type="term" value="P:mammary gland specification"/>
    <property type="evidence" value="ECO:0007669"/>
    <property type="project" value="Ensembl"/>
</dbReference>
<dbReference type="GO" id="GO:0030318">
    <property type="term" value="P:melanocyte differentiation"/>
    <property type="evidence" value="ECO:0007669"/>
    <property type="project" value="Ensembl"/>
</dbReference>
<dbReference type="GO" id="GO:0001656">
    <property type="term" value="P:metanephros development"/>
    <property type="evidence" value="ECO:0007669"/>
    <property type="project" value="Ensembl"/>
</dbReference>
<dbReference type="GO" id="GO:0046639">
    <property type="term" value="P:negative regulation of alpha-beta T cell differentiation"/>
    <property type="evidence" value="ECO:0000250"/>
    <property type="project" value="BHF-UCL"/>
</dbReference>
<dbReference type="GO" id="GO:0043066">
    <property type="term" value="P:negative regulation of apoptotic process"/>
    <property type="evidence" value="ECO:0007669"/>
    <property type="project" value="Ensembl"/>
</dbReference>
<dbReference type="GO" id="GO:0090090">
    <property type="term" value="P:negative regulation of canonical Wnt signaling pathway"/>
    <property type="evidence" value="ECO:0000314"/>
    <property type="project" value="UniProtKB"/>
</dbReference>
<dbReference type="GO" id="GO:0032331">
    <property type="term" value="P:negative regulation of chondrocyte differentiation"/>
    <property type="evidence" value="ECO:0007669"/>
    <property type="project" value="Ensembl"/>
</dbReference>
<dbReference type="GO" id="GO:0045892">
    <property type="term" value="P:negative regulation of DNA-templated transcription"/>
    <property type="evidence" value="ECO:0000314"/>
    <property type="project" value="UniProtKB"/>
</dbReference>
<dbReference type="GO" id="GO:0045665">
    <property type="term" value="P:negative regulation of neuron differentiation"/>
    <property type="evidence" value="ECO:0007669"/>
    <property type="project" value="Ensembl"/>
</dbReference>
<dbReference type="GO" id="GO:0045879">
    <property type="term" value="P:negative regulation of smoothened signaling pathway"/>
    <property type="evidence" value="ECO:0000250"/>
    <property type="project" value="BHF-UCL"/>
</dbReference>
<dbReference type="GO" id="GO:2000647">
    <property type="term" value="P:negative regulation of stem cell proliferation"/>
    <property type="evidence" value="ECO:0007669"/>
    <property type="project" value="Ensembl"/>
</dbReference>
<dbReference type="GO" id="GO:0000122">
    <property type="term" value="P:negative regulation of transcription by RNA polymerase II"/>
    <property type="evidence" value="ECO:0000314"/>
    <property type="project" value="UniProtKB"/>
</dbReference>
<dbReference type="GO" id="GO:0045060">
    <property type="term" value="P:negative thymic T cell selection"/>
    <property type="evidence" value="ECO:0000250"/>
    <property type="project" value="BHF-UCL"/>
</dbReference>
<dbReference type="GO" id="GO:0007405">
    <property type="term" value="P:neuroblast proliferation"/>
    <property type="evidence" value="ECO:0007669"/>
    <property type="project" value="Ensembl"/>
</dbReference>
<dbReference type="GO" id="GO:0043585">
    <property type="term" value="P:nose morphogenesis"/>
    <property type="evidence" value="ECO:0000304"/>
    <property type="project" value="BHF-UCL"/>
</dbReference>
<dbReference type="GO" id="GO:0042475">
    <property type="term" value="P:odontogenesis of dentin-containing tooth"/>
    <property type="evidence" value="ECO:0007669"/>
    <property type="project" value="Ensembl"/>
</dbReference>
<dbReference type="GO" id="GO:0048709">
    <property type="term" value="P:oligodendrocyte differentiation"/>
    <property type="evidence" value="ECO:0007669"/>
    <property type="project" value="Ensembl"/>
</dbReference>
<dbReference type="GO" id="GO:0021631">
    <property type="term" value="P:optic nerve morphogenesis"/>
    <property type="evidence" value="ECO:0007669"/>
    <property type="project" value="Ensembl"/>
</dbReference>
<dbReference type="GO" id="GO:0001649">
    <property type="term" value="P:osteoblast differentiation"/>
    <property type="evidence" value="ECO:0007669"/>
    <property type="project" value="Ensembl"/>
</dbReference>
<dbReference type="GO" id="GO:0046638">
    <property type="term" value="P:positive regulation of alpha-beta T cell differentiation"/>
    <property type="evidence" value="ECO:0000250"/>
    <property type="project" value="BHF-UCL"/>
</dbReference>
<dbReference type="GO" id="GO:0032332">
    <property type="term" value="P:positive regulation of chondrocyte differentiation"/>
    <property type="evidence" value="ECO:0007669"/>
    <property type="project" value="Ensembl"/>
</dbReference>
<dbReference type="GO" id="GO:0045893">
    <property type="term" value="P:positive regulation of DNA-templated transcription"/>
    <property type="evidence" value="ECO:0000250"/>
    <property type="project" value="UniProtKB"/>
</dbReference>
<dbReference type="GO" id="GO:0002052">
    <property type="term" value="P:positive regulation of neuroblast proliferation"/>
    <property type="evidence" value="ECO:0007669"/>
    <property type="project" value="Ensembl"/>
</dbReference>
<dbReference type="GO" id="GO:0045669">
    <property type="term" value="P:positive regulation of osteoblast differentiation"/>
    <property type="evidence" value="ECO:0007669"/>
    <property type="project" value="Ensembl"/>
</dbReference>
<dbReference type="GO" id="GO:0042307">
    <property type="term" value="P:positive regulation of protein import into nucleus"/>
    <property type="evidence" value="ECO:0007669"/>
    <property type="project" value="Ensembl"/>
</dbReference>
<dbReference type="GO" id="GO:0045944">
    <property type="term" value="P:positive regulation of transcription by RNA polymerase II"/>
    <property type="evidence" value="ECO:0000314"/>
    <property type="project" value="UniProtKB"/>
</dbReference>
<dbReference type="GO" id="GO:0006606">
    <property type="term" value="P:protein import into nucleus"/>
    <property type="evidence" value="ECO:0007669"/>
    <property type="project" value="Ensembl"/>
</dbReference>
<dbReference type="GO" id="GO:0016485">
    <property type="term" value="P:protein processing"/>
    <property type="evidence" value="ECO:0007669"/>
    <property type="project" value="Ensembl"/>
</dbReference>
<dbReference type="GO" id="GO:0009954">
    <property type="term" value="P:proximal/distal pattern formation"/>
    <property type="evidence" value="ECO:0007669"/>
    <property type="project" value="Ensembl"/>
</dbReference>
<dbReference type="GO" id="GO:1903010">
    <property type="term" value="P:regulation of bone development"/>
    <property type="evidence" value="ECO:0007669"/>
    <property type="project" value="Ensembl"/>
</dbReference>
<dbReference type="GO" id="GO:0006355">
    <property type="term" value="P:regulation of DNA-templated transcription"/>
    <property type="evidence" value="ECO:0000314"/>
    <property type="project" value="ComplexPortal"/>
</dbReference>
<dbReference type="GO" id="GO:0006357">
    <property type="term" value="P:regulation of transcription by RNA polymerase II"/>
    <property type="evidence" value="ECO:0000318"/>
    <property type="project" value="GO_Central"/>
</dbReference>
<dbReference type="GO" id="GO:0060021">
    <property type="term" value="P:roof of mouth development"/>
    <property type="evidence" value="ECO:0007669"/>
    <property type="project" value="Ensembl"/>
</dbReference>
<dbReference type="GO" id="GO:0060367">
    <property type="term" value="P:sagittal suture morphogenesis"/>
    <property type="evidence" value="ECO:0007669"/>
    <property type="project" value="Ensembl"/>
</dbReference>
<dbReference type="GO" id="GO:0007224">
    <property type="term" value="P:smoothened signaling pathway"/>
    <property type="evidence" value="ECO:0000314"/>
    <property type="project" value="FlyBase"/>
</dbReference>
<dbReference type="GO" id="GO:0060831">
    <property type="term" value="P:smoothened signaling pathway involved in dorsal/ventral neural tube patterning"/>
    <property type="evidence" value="ECO:0007669"/>
    <property type="project" value="Ensembl"/>
</dbReference>
<dbReference type="GO" id="GO:0021776">
    <property type="term" value="P:smoothened signaling pathway involved in spinal cord motor neuron cell fate specification"/>
    <property type="evidence" value="ECO:0007669"/>
    <property type="project" value="Ensembl"/>
</dbReference>
<dbReference type="GO" id="GO:0021775">
    <property type="term" value="P:smoothened signaling pathway involved in ventral spinal cord interneuron specification"/>
    <property type="evidence" value="ECO:0007669"/>
    <property type="project" value="Ensembl"/>
</dbReference>
<dbReference type="GO" id="GO:0072089">
    <property type="term" value="P:stem cell proliferation"/>
    <property type="evidence" value="ECO:0007669"/>
    <property type="project" value="Ensembl"/>
</dbReference>
<dbReference type="GO" id="GO:0033077">
    <property type="term" value="P:T cell differentiation in thymus"/>
    <property type="evidence" value="ECO:0000250"/>
    <property type="project" value="BHF-UCL"/>
</dbReference>
<dbReference type="GO" id="GO:0070242">
    <property type="term" value="P:thymocyte apoptotic process"/>
    <property type="evidence" value="ECO:0000250"/>
    <property type="project" value="BHF-UCL"/>
</dbReference>
<dbReference type="GO" id="GO:0043586">
    <property type="term" value="P:tongue development"/>
    <property type="evidence" value="ECO:0007669"/>
    <property type="project" value="Ensembl"/>
</dbReference>
<dbReference type="GO" id="GO:0071625">
    <property type="term" value="P:vocalization behavior"/>
    <property type="evidence" value="ECO:0007669"/>
    <property type="project" value="Ensembl"/>
</dbReference>
<dbReference type="DisProt" id="DP01134"/>
<dbReference type="FunFam" id="3.30.160.60:FF:000019">
    <property type="entry name" value="GLI family zinc finger 3"/>
    <property type="match status" value="1"/>
</dbReference>
<dbReference type="FunFam" id="3.30.160.60:FF:000031">
    <property type="entry name" value="GLI family zinc finger 3"/>
    <property type="match status" value="1"/>
</dbReference>
<dbReference type="FunFam" id="3.30.160.60:FF:000036">
    <property type="entry name" value="GLI family zinc finger 3"/>
    <property type="match status" value="1"/>
</dbReference>
<dbReference type="FunFam" id="3.30.160.60:FF:000048">
    <property type="entry name" value="GLI family zinc finger 3"/>
    <property type="match status" value="1"/>
</dbReference>
<dbReference type="FunFam" id="3.30.160.60:FF:000068">
    <property type="entry name" value="GLI family zinc finger 3"/>
    <property type="match status" value="1"/>
</dbReference>
<dbReference type="Gene3D" id="3.30.160.60">
    <property type="entry name" value="Classic Zinc Finger"/>
    <property type="match status" value="5"/>
</dbReference>
<dbReference type="InterPro" id="IPR043359">
    <property type="entry name" value="GLI-like"/>
</dbReference>
<dbReference type="InterPro" id="IPR056436">
    <property type="entry name" value="Znf-C2H2_ZIC1-5/GLI1-3-like"/>
</dbReference>
<dbReference type="InterPro" id="IPR036236">
    <property type="entry name" value="Znf_C2H2_sf"/>
</dbReference>
<dbReference type="InterPro" id="IPR013087">
    <property type="entry name" value="Znf_C2H2_type"/>
</dbReference>
<dbReference type="PANTHER" id="PTHR45718">
    <property type="entry name" value="TRANSCRIPTIONAL ACTIVATOR CUBITUS INTERRUPTUS"/>
    <property type="match status" value="1"/>
</dbReference>
<dbReference type="PANTHER" id="PTHR45718:SF5">
    <property type="entry name" value="TRANSCRIPTIONAL ACTIVATOR GLI3"/>
    <property type="match status" value="1"/>
</dbReference>
<dbReference type="Pfam" id="PF00096">
    <property type="entry name" value="zf-C2H2"/>
    <property type="match status" value="2"/>
</dbReference>
<dbReference type="Pfam" id="PF23561">
    <property type="entry name" value="zf-C2H2_15"/>
    <property type="match status" value="1"/>
</dbReference>
<dbReference type="SMART" id="SM00355">
    <property type="entry name" value="ZnF_C2H2"/>
    <property type="match status" value="5"/>
</dbReference>
<dbReference type="SUPFAM" id="SSF57667">
    <property type="entry name" value="beta-beta-alpha zinc fingers"/>
    <property type="match status" value="3"/>
</dbReference>
<dbReference type="PROSITE" id="PS00028">
    <property type="entry name" value="ZINC_FINGER_C2H2_1"/>
    <property type="match status" value="4"/>
</dbReference>
<dbReference type="PROSITE" id="PS50157">
    <property type="entry name" value="ZINC_FINGER_C2H2_2"/>
    <property type="match status" value="5"/>
</dbReference>
<comment type="function">
    <text evidence="6 7 14">Has a dual function as a transcriptional activator and a repressor of the sonic hedgehog (Shh) pathway, and plays a role in limb development. The full-length GLI3 form (GLI3FL) after phosphorylation and nuclear translocation, acts as an activator (GLI3A) while GLI3R, its C-terminally truncated form, acts as a repressor. A proper balance between the GLI3 activator and the repressor GLI3R, rather than the repressor gradient itself or the activator/repressor ratio gradient, specifies limb digit number and identity. In concert with TRPS1, plays a role in regulating the size of the zone of distal chondrocytes, in restricting the zone of PTHLH expression in distal cells and in activating chondrocyte proliferation. Binds to the minimal GLI-consensus sequence 5'-GGGTGGTC-3'.</text>
</comment>
<comment type="subunit">
    <text evidence="1 7 11 12 14 15 16 18 19 20 21">The full-length GLI3 form (GLI3FL) interacts with SUFU and this interaction regulates the formation of either repressor or activator forms of GLI3. Its association with SUFU is regulated by Hh signaling and dissociation of the SUFU-GLI3 interaction requires the presence of the ciliary motor KIF3A (By similarity). Interacts with KIF7. The activator form of GLI3 (GLI3A) but not the repressor form (GLI3R) can interact with TRPS1. The phosphorylated form interacts with BTRC. Interacts with ZIC1. Interacts with ZIC3 (via C2H2-type domains 3, 4 and 5); the interaction enhances its transcriptional activity. Interacts with WRD11; the interaction associates EMX1 with GLI3 (PubMed:29263200). Interacts with DZIP1; retains GLI3 within the cytoplasm (PubMed:23955340).</text>
</comment>
<comment type="interaction">
    <interactant intactId="EBI-308055">
        <id>P10071</id>
    </interactant>
    <interactant intactId="EBI-740595">
        <id>Q9UMX1</id>
        <label>SUFU</label>
    </interactant>
    <organismsDiffer>false</organismsDiffer>
    <experiments>5</experiments>
</comment>
<comment type="interaction">
    <interactant intactId="EBI-308055">
        <id>P10071</id>
    </interactant>
    <interactant intactId="EBI-7128920">
        <id>Q6ZWS8</id>
        <label>Spop</label>
    </interactant>
    <organismsDiffer>true</organismsDiffer>
    <experiments>2</experiments>
</comment>
<comment type="interaction">
    <interactant intactId="EBI-308055">
        <id>P10071</id>
    </interactant>
    <interactant intactId="EBI-308006">
        <id>P46684</id>
        <label>Zic1</label>
    </interactant>
    <organismsDiffer>true</organismsDiffer>
    <experiments>2</experiments>
</comment>
<comment type="interaction">
    <interactant intactId="EBI-308055">
        <id>P10071</id>
    </interactant>
    <interactant intactId="EBI-308076">
        <id>Q62520</id>
        <label>Zic2</label>
    </interactant>
    <organismsDiffer>true</organismsDiffer>
    <experiments>2</experiments>
</comment>
<comment type="interaction">
    <interactant intactId="EBI-26568850">
        <id>PRO_0000406137</id>
    </interactant>
    <interactant intactId="EBI-26568770">
        <id>Q04741</id>
        <label>EMX1</label>
    </interactant>
    <organismsDiffer>false</organismsDiffer>
    <experiments>3</experiments>
</comment>
<comment type="interaction">
    <interactant intactId="EBI-26568850">
        <id>PRO_0000406137</id>
    </interactant>
    <interactant intactId="EBI-2009923">
        <id>Q9BZH6</id>
        <label>WDR11</label>
    </interactant>
    <organismsDiffer>false</organismsDiffer>
    <experiments>3</experiments>
</comment>
<comment type="subcellular location">
    <subcellularLocation>
        <location>Nucleus</location>
    </subcellularLocation>
    <subcellularLocation>
        <location>Cytoplasm</location>
    </subcellularLocation>
    <subcellularLocation>
        <location>Cell projection</location>
        <location>Cilium</location>
    </subcellularLocation>
    <text>GLI3FL is localized predominantly in the cytoplasm while GLI3R resides mainly in the nucleus. Ciliary accumulation requires the presence of KIF7 and SMO. Translocation to the nucleus is promoted by interaction with ZIC1.</text>
</comment>
<comment type="tissue specificity">
    <text>Is expressed in a wide variety of normal adult tissues, including lung, colon, spleen, placenta, testis, and myometrium.</text>
</comment>
<comment type="PTM">
    <text>Phosphorylated on multiple sites by protein kinase A (PKA) and phosphorylation by PKA primes further phosphorylation by CK1 and GSK3. Phosphorylated by DYRK2 (in vitro). Phosphorylation is essential for its proteolytic processing.</text>
</comment>
<comment type="PTM">
    <text evidence="11 12">Transcriptional repressor GLI3R, a C-terminally truncated form, is generated from the full-length GLI3 protein (GLI3FL/GLI3-190) through proteolytic processing. This process requires PKA-primed phosphorylation of GLI3, ubiquitination of GLI3 and the presence of BTRC. GLI3FL is complexed with SUFU in the cytoplasm and is maintained in a neutral state. Without the Hh signal, the SUFU-GLI3 complex is recruited to cilia, leading to the efficient processing of GLI3FL into GLI3R. GLI3R formation leads to its dissociation from SUFU, allowing it to translocate into the nucleus, and repress Hh target genes. When Hh signaling is initiated, SUFU dissociates from GLI3FL and this has two consequences. First, GLI3R production is halted. Second, free GLI3FL translocates to the nucleus, where it is phosphorylated, destabilized, and converted to a transcriptional activator (GLI3A). Phosphorylated in vitro by ULK3.</text>
</comment>
<comment type="disease" evidence="4 8 9 22">
    <disease id="DI-01685">
        <name>Greig cephalo-poly-syndactyly syndrome</name>
        <acronym>GCPS</acronym>
        <description>Autosomal dominant disorder affecting limb and craniofacial development. It is characterized by pre- and postaxial polydactyly, syndactyly of fingers and toes, macrocephaly and hypertelorism.</description>
        <dbReference type="MIM" id="175700"/>
    </disease>
    <text>The disease is caused by variants affecting the gene represented in this entry.</text>
</comment>
<comment type="disease" evidence="5">
    <disease id="DI-02122">
        <name>Pallister-Hall syndrome</name>
        <acronym>PHS</acronym>
        <description>An autosomal dominant disorder characterized by a wide range of clinical manifestations. Clinical features include hypothalamic hamartoma, pituitary dysfunction, central or postaxial polydactyly, and syndactyly. Malformations are frequent in the viscera, e.g. anal atresia, bifid uvula, congenital heart malformations, pulmonary or renal dysplasia.</description>
        <dbReference type="MIM" id="146510"/>
    </disease>
    <text>The disease is caused by variants affecting the gene represented in this entry.</text>
</comment>
<comment type="disease" evidence="5">
    <disease id="DI-02397">
        <name>Polydactyly, postaxial A1</name>
        <acronym>PAPA1</acronym>
        <description>A condition characterized by the occurrence of supernumerary digits in the upper and/or lower extremities. In postaxial polydactyly type A, the extra digit is well-formed and articulates with the fifth or a sixth metacarpal/metatarsal.</description>
        <dbReference type="MIM" id="174200"/>
    </disease>
    <text>The disease is caused by variants affecting the gene represented in this entry.</text>
</comment>
<comment type="disease" evidence="5">
    <disease id="DI-03100">
        <name>Polydactyly, postaxial B</name>
        <acronym>PAPB</acronym>
        <description>A condition characterized by an extra digit in the occurrence of supernumerary digits in the upper and/or lower extremities. In postaxial polydactyly type B the extra digit is not well formed and is frequently in the form of a skin.</description>
        <dbReference type="MIM" id="174200"/>
    </disease>
    <text>The disease is caused by variants affecting the gene represented in this entry.</text>
</comment>
<comment type="disease" evidence="5">
    <disease id="DI-02401">
        <name>Polydactyly, preaxial 4</name>
        <acronym>PPD4</acronym>
        <description>A form of polydactyly, a condition defined by the occurrence of supernumerary digits in the upper and/or lower extremities. Preaxial or radial polydactyly refers to the presence of extra digits on the radial side of the hand. PPD4 is an autosomal dominant form characterized by mild duplication of the thumb, syndactyly of various degrees affects fingers 3 and 4, duplication of part or all of the first or second toes and variable toes syndactyly. Some patients have only foot involvement.</description>
        <dbReference type="MIM" id="174700"/>
    </disease>
    <text>The disease is caused by variants affecting the gene represented in this entry.</text>
</comment>
<comment type="similarity">
    <text evidence="23">Belongs to the GLI C2H2-type zinc-finger protein family.</text>
</comment>
<comment type="sequence caution" evidence="23">
    <conflict type="frameshift">
        <sequence resource="EMBL-CDS" id="AAA52564"/>
    </conflict>
</comment>
<evidence type="ECO:0000250" key="1">
    <source>
        <dbReference type="UniProtKB" id="Q61602"/>
    </source>
</evidence>
<evidence type="ECO:0000255" key="2">
    <source>
        <dbReference type="PROSITE-ProRule" id="PRU00042"/>
    </source>
</evidence>
<evidence type="ECO:0000256" key="3">
    <source>
        <dbReference type="SAM" id="MobiDB-lite"/>
    </source>
</evidence>
<evidence type="ECO:0000269" key="4">
    <source>
    </source>
</evidence>
<evidence type="ECO:0000269" key="5">
    <source>
    </source>
</evidence>
<evidence type="ECO:0000269" key="6">
    <source>
    </source>
</evidence>
<evidence type="ECO:0000269" key="7">
    <source>
    </source>
</evidence>
<evidence type="ECO:0000269" key="8">
    <source>
    </source>
</evidence>
<evidence type="ECO:0000269" key="9">
    <source>
    </source>
</evidence>
<evidence type="ECO:0000269" key="10">
    <source>
    </source>
</evidence>
<evidence type="ECO:0000269" key="11">
    <source>
    </source>
</evidence>
<evidence type="ECO:0000269" key="12">
    <source>
    </source>
</evidence>
<evidence type="ECO:0000269" key="13">
    <source>
    </source>
</evidence>
<evidence type="ECO:0000269" key="14">
    <source>
    </source>
</evidence>
<evidence type="ECO:0000269" key="15">
    <source>
    </source>
</evidence>
<evidence type="ECO:0000269" key="16">
    <source>
    </source>
</evidence>
<evidence type="ECO:0000269" key="17">
    <source>
    </source>
</evidence>
<evidence type="ECO:0000269" key="18">
    <source>
    </source>
</evidence>
<evidence type="ECO:0000269" key="19">
    <source>
    </source>
</evidence>
<evidence type="ECO:0000269" key="20">
    <source>
    </source>
</evidence>
<evidence type="ECO:0000269" key="21">
    <source>
    </source>
</evidence>
<evidence type="ECO:0000269" key="22">
    <source>
    </source>
</evidence>
<evidence type="ECO:0000305" key="23"/>
<evidence type="ECO:0007744" key="24">
    <source>
    </source>
</evidence>
<evidence type="ECO:0007744" key="25">
    <source>
    </source>
</evidence>
<evidence type="ECO:0007744" key="26">
    <source>
    </source>
</evidence>
<evidence type="ECO:0007744" key="27">
    <source>
    </source>
</evidence>
<evidence type="ECO:0007829" key="28">
    <source>
        <dbReference type="PDB" id="4BLD"/>
    </source>
</evidence>
<gene>
    <name type="primary">GLI3</name>
</gene>